<sequence>MAAPSVPTPLYGHVGRGAFRDVYEPAEDTFLLLDALEAAAAELAGVEICLEVGAGSGVVSAFLASMIGPRALYMCTDINPEAAACTLETARCNRVHVQPVITDLVHGLLPRLKGKVDLLVFNPPYVVTPPEEVGSRGIEAAWAGGRNGREVMDRFFPLAPELLSPRGLFYLVTVKENNPEEIFKTMKTRGLQGTTALCRQAGQEALSVLRFSKS</sequence>
<organism>
    <name type="scientific">Mus musculus</name>
    <name type="common">Mouse</name>
    <dbReference type="NCBI Taxonomy" id="10090"/>
    <lineage>
        <taxon>Eukaryota</taxon>
        <taxon>Metazoa</taxon>
        <taxon>Chordata</taxon>
        <taxon>Craniata</taxon>
        <taxon>Vertebrata</taxon>
        <taxon>Euteleostomi</taxon>
        <taxon>Mammalia</taxon>
        <taxon>Eutheria</taxon>
        <taxon>Euarchontoglires</taxon>
        <taxon>Glires</taxon>
        <taxon>Rodentia</taxon>
        <taxon>Myomorpha</taxon>
        <taxon>Muroidea</taxon>
        <taxon>Muridae</taxon>
        <taxon>Murinae</taxon>
        <taxon>Mus</taxon>
        <taxon>Mus</taxon>
    </lineage>
</organism>
<name>HEMK2_MOUSE</name>
<comment type="function">
    <text evidence="1 4 5">Methyltransferase that can methylate proteins and, to a lower extent, arsenic (PubMed:20606008, PubMed:26797129). Catalytic subunit of a heterodimer with TRMT112, which monomethylates 'Lys-12' of histone H4 (H4K12me1), a modification present at the promoters of numerous genes encoding cell cycle regulators (By similarity). Catalytic subunit of a heterodimer with TRMT112, which catalyzes N5-methylation of Glu residue of proteins with a Gly-Gln-Xaa-Xaa-Xaa-Arg motif (PubMed:26797129). Methylates ETF1 on 'Gln-185'; ETF1 needs to be complexed to ERF3 in its GTP-bound form to be efficiently methylated (PubMed:20606008, PubMed:26797129). May also play a role in the modulation of arsenic-induced toxicity by mediating the conversion of monomethylarsonous acid (3+) into the less toxic dimethylarsonic acid (By similarity). It however only plays a limited role in arsenic metabolism compared with AS3MT (By similarity).</text>
</comment>
<comment type="catalytic activity">
    <reaction evidence="1">
        <text>L-lysyl-[histone] + S-adenosyl-L-methionine = N(6)-methyl-L-lysyl-[histone] + S-adenosyl-L-homocysteine + H(+)</text>
        <dbReference type="Rhea" id="RHEA:10024"/>
        <dbReference type="Rhea" id="RHEA-COMP:9845"/>
        <dbReference type="Rhea" id="RHEA-COMP:9846"/>
        <dbReference type="ChEBI" id="CHEBI:15378"/>
        <dbReference type="ChEBI" id="CHEBI:29969"/>
        <dbReference type="ChEBI" id="CHEBI:57856"/>
        <dbReference type="ChEBI" id="CHEBI:59789"/>
        <dbReference type="ChEBI" id="CHEBI:61929"/>
    </reaction>
    <physiologicalReaction direction="left-to-right" evidence="1">
        <dbReference type="Rhea" id="RHEA:10025"/>
    </physiologicalReaction>
</comment>
<comment type="catalytic activity">
    <reaction evidence="4 5">
        <text>L-glutaminyl-[protein] + S-adenosyl-L-methionine = N(5)-methyl-L-glutaminyl-[protein] + S-adenosyl-L-homocysteine + H(+)</text>
        <dbReference type="Rhea" id="RHEA:57452"/>
        <dbReference type="Rhea" id="RHEA-COMP:10207"/>
        <dbReference type="Rhea" id="RHEA-COMP:14895"/>
        <dbReference type="ChEBI" id="CHEBI:15378"/>
        <dbReference type="ChEBI" id="CHEBI:30011"/>
        <dbReference type="ChEBI" id="CHEBI:57856"/>
        <dbReference type="ChEBI" id="CHEBI:59789"/>
        <dbReference type="ChEBI" id="CHEBI:61891"/>
    </reaction>
</comment>
<comment type="catalytic activity">
    <reaction evidence="1">
        <text>methylarsonous acid + S-adenosyl-L-methionine = dimethylarsinate + S-adenosyl-L-homocysteine + 2 H(+)</text>
        <dbReference type="Rhea" id="RHEA:11684"/>
        <dbReference type="ChEBI" id="CHEBI:15378"/>
        <dbReference type="ChEBI" id="CHEBI:16223"/>
        <dbReference type="ChEBI" id="CHEBI:17826"/>
        <dbReference type="ChEBI" id="CHEBI:57856"/>
        <dbReference type="ChEBI" id="CHEBI:59789"/>
    </reaction>
</comment>
<comment type="subunit">
    <text evidence="5">Heterodimer; heterodimerization with TRMT112 is required for S-adenosyl-L-methionine-binding.</text>
</comment>
<comment type="subcellular location">
    <subcellularLocation>
        <location evidence="2 3">Nucleus</location>
    </subcellularLocation>
</comment>
<comment type="alternative products">
    <event type="alternative splicing"/>
    <isoform>
        <id>Q6SKR2-1</id>
        <name>1</name>
        <name evidence="6">Alpha</name>
        <name evidence="7">mHemk1</name>
        <sequence type="displayed"/>
    </isoform>
    <isoform>
        <id>Q6SKR2-2</id>
        <name>2</name>
        <name evidence="6">Beta</name>
        <name evidence="7">mHemk2</name>
        <sequence type="described" ref="VSP_059901 VSP_059902"/>
    </isoform>
    <isoform>
        <id>Q6SKR2-3</id>
        <name>3</name>
        <sequence type="described" ref="VSP_059900 VSP_059903"/>
    </isoform>
</comment>
<comment type="tissue specificity">
    <text evidence="3">Highly expressed in undifferentiated embryonic stem cells (at protein level) (PubMed:19116772). Also expressed in testis and brain, weakly expressed in differentiated embryonic stem cells and kidney (PubMed:19116772). Not expressed in muscle, heart, placenta, pancreas, lung and stomach (PubMed:19116772).</text>
</comment>
<comment type="PTM">
    <text evidence="1">Ubiquitinated, leading to its degradation by the proteasome.</text>
</comment>
<comment type="disruption phenotype">
    <text evidence="4">Early embryonic lethality (PubMed:20606008). The postimplantation development of mutant embryos is impaired, resulting in degeneration around embryonic day 6.5 (PubMed:20606008).</text>
</comment>
<comment type="similarity">
    <text evidence="8">Belongs to the eukaryotic/archaeal PrmC-related family.</text>
</comment>
<comment type="sequence caution" evidence="8">
    <conflict type="erroneous gene model prediction">
        <sequence resource="EMBL" id="AC140319"/>
    </conflict>
</comment>
<comment type="sequence caution" evidence="8">
    <conflict type="erroneous gene model prediction">
        <sequence resource="EMBL-CDS" id="EDK98331"/>
    </conflict>
</comment>
<reference key="1">
    <citation type="journal article" date="2006" name="FEBS Lett.">
        <title>Undetectable levels of N6-methyl adenine in mouse DNA: Cloning and analysis of PRED28, a gene coding for a putative mammalian DNA adenine methyltransferase.</title>
        <authorList>
            <person name="Ratel D."/>
            <person name="Ravanat J.L."/>
            <person name="Charles M.P."/>
            <person name="Platet N."/>
            <person name="Breuillaud L."/>
            <person name="Lunardi J."/>
            <person name="Berger F."/>
            <person name="Wion D."/>
        </authorList>
    </citation>
    <scope>NUCLEOTIDE SEQUENCE [MRNA] (ISOFORM 1)</scope>
    <scope>SUBCELLULAR LOCATION</scope>
    <source>
        <strain>C57BL/6J</strain>
    </source>
</reference>
<reference key="2">
    <citation type="journal article" date="2009" name="Mol. Biol. Rep.">
        <title>Cloning and primarily function study of two novel putative N5-glutamine methyltransferase (Hemk) splice variants from mouse stem cells.</title>
        <authorList>
            <person name="Nie D.S."/>
            <person name="Liu Y.B."/>
            <person name="Lu G.X."/>
        </authorList>
    </citation>
    <scope>NUCLEOTIDE SEQUENCE [MRNA] (ISOFORMS 1 AND 2)</scope>
    <scope>SUBCELLULAR LOCATION</scope>
    <scope>TISSUE SPECIFICITY</scope>
</reference>
<reference key="3">
    <citation type="journal article" date="2005" name="Science">
        <title>The transcriptional landscape of the mammalian genome.</title>
        <authorList>
            <person name="Carninci P."/>
            <person name="Kasukawa T."/>
            <person name="Katayama S."/>
            <person name="Gough J."/>
            <person name="Frith M.C."/>
            <person name="Maeda N."/>
            <person name="Oyama R."/>
            <person name="Ravasi T."/>
            <person name="Lenhard B."/>
            <person name="Wells C."/>
            <person name="Kodzius R."/>
            <person name="Shimokawa K."/>
            <person name="Bajic V.B."/>
            <person name="Brenner S.E."/>
            <person name="Batalov S."/>
            <person name="Forrest A.R."/>
            <person name="Zavolan M."/>
            <person name="Davis M.J."/>
            <person name="Wilming L.G."/>
            <person name="Aidinis V."/>
            <person name="Allen J.E."/>
            <person name="Ambesi-Impiombato A."/>
            <person name="Apweiler R."/>
            <person name="Aturaliya R.N."/>
            <person name="Bailey T.L."/>
            <person name="Bansal M."/>
            <person name="Baxter L."/>
            <person name="Beisel K.W."/>
            <person name="Bersano T."/>
            <person name="Bono H."/>
            <person name="Chalk A.M."/>
            <person name="Chiu K.P."/>
            <person name="Choudhary V."/>
            <person name="Christoffels A."/>
            <person name="Clutterbuck D.R."/>
            <person name="Crowe M.L."/>
            <person name="Dalla E."/>
            <person name="Dalrymple B.P."/>
            <person name="de Bono B."/>
            <person name="Della Gatta G."/>
            <person name="di Bernardo D."/>
            <person name="Down T."/>
            <person name="Engstrom P."/>
            <person name="Fagiolini M."/>
            <person name="Faulkner G."/>
            <person name="Fletcher C.F."/>
            <person name="Fukushima T."/>
            <person name="Furuno M."/>
            <person name="Futaki S."/>
            <person name="Gariboldi M."/>
            <person name="Georgii-Hemming P."/>
            <person name="Gingeras T.R."/>
            <person name="Gojobori T."/>
            <person name="Green R.E."/>
            <person name="Gustincich S."/>
            <person name="Harbers M."/>
            <person name="Hayashi Y."/>
            <person name="Hensch T.K."/>
            <person name="Hirokawa N."/>
            <person name="Hill D."/>
            <person name="Huminiecki L."/>
            <person name="Iacono M."/>
            <person name="Ikeo K."/>
            <person name="Iwama A."/>
            <person name="Ishikawa T."/>
            <person name="Jakt M."/>
            <person name="Kanapin A."/>
            <person name="Katoh M."/>
            <person name="Kawasawa Y."/>
            <person name="Kelso J."/>
            <person name="Kitamura H."/>
            <person name="Kitano H."/>
            <person name="Kollias G."/>
            <person name="Krishnan S.P."/>
            <person name="Kruger A."/>
            <person name="Kummerfeld S.K."/>
            <person name="Kurochkin I.V."/>
            <person name="Lareau L.F."/>
            <person name="Lazarevic D."/>
            <person name="Lipovich L."/>
            <person name="Liu J."/>
            <person name="Liuni S."/>
            <person name="McWilliam S."/>
            <person name="Madan Babu M."/>
            <person name="Madera M."/>
            <person name="Marchionni L."/>
            <person name="Matsuda H."/>
            <person name="Matsuzawa S."/>
            <person name="Miki H."/>
            <person name="Mignone F."/>
            <person name="Miyake S."/>
            <person name="Morris K."/>
            <person name="Mottagui-Tabar S."/>
            <person name="Mulder N."/>
            <person name="Nakano N."/>
            <person name="Nakauchi H."/>
            <person name="Ng P."/>
            <person name="Nilsson R."/>
            <person name="Nishiguchi S."/>
            <person name="Nishikawa S."/>
            <person name="Nori F."/>
            <person name="Ohara O."/>
            <person name="Okazaki Y."/>
            <person name="Orlando V."/>
            <person name="Pang K.C."/>
            <person name="Pavan W.J."/>
            <person name="Pavesi G."/>
            <person name="Pesole G."/>
            <person name="Petrovsky N."/>
            <person name="Piazza S."/>
            <person name="Reed J."/>
            <person name="Reid J.F."/>
            <person name="Ring B.Z."/>
            <person name="Ringwald M."/>
            <person name="Rost B."/>
            <person name="Ruan Y."/>
            <person name="Salzberg S.L."/>
            <person name="Sandelin A."/>
            <person name="Schneider C."/>
            <person name="Schoenbach C."/>
            <person name="Sekiguchi K."/>
            <person name="Semple C.A."/>
            <person name="Seno S."/>
            <person name="Sessa L."/>
            <person name="Sheng Y."/>
            <person name="Shibata Y."/>
            <person name="Shimada H."/>
            <person name="Shimada K."/>
            <person name="Silva D."/>
            <person name="Sinclair B."/>
            <person name="Sperling S."/>
            <person name="Stupka E."/>
            <person name="Sugiura K."/>
            <person name="Sultana R."/>
            <person name="Takenaka Y."/>
            <person name="Taki K."/>
            <person name="Tammoja K."/>
            <person name="Tan S.L."/>
            <person name="Tang S."/>
            <person name="Taylor M.S."/>
            <person name="Tegner J."/>
            <person name="Teichmann S.A."/>
            <person name="Ueda H.R."/>
            <person name="van Nimwegen E."/>
            <person name="Verardo R."/>
            <person name="Wei C.L."/>
            <person name="Yagi K."/>
            <person name="Yamanishi H."/>
            <person name="Zabarovsky E."/>
            <person name="Zhu S."/>
            <person name="Zimmer A."/>
            <person name="Hide W."/>
            <person name="Bult C."/>
            <person name="Grimmond S.M."/>
            <person name="Teasdale R.D."/>
            <person name="Liu E.T."/>
            <person name="Brusic V."/>
            <person name="Quackenbush J."/>
            <person name="Wahlestedt C."/>
            <person name="Mattick J.S."/>
            <person name="Hume D.A."/>
            <person name="Kai C."/>
            <person name="Sasaki D."/>
            <person name="Tomaru Y."/>
            <person name="Fukuda S."/>
            <person name="Kanamori-Katayama M."/>
            <person name="Suzuki M."/>
            <person name="Aoki J."/>
            <person name="Arakawa T."/>
            <person name="Iida J."/>
            <person name="Imamura K."/>
            <person name="Itoh M."/>
            <person name="Kato T."/>
            <person name="Kawaji H."/>
            <person name="Kawagashira N."/>
            <person name="Kawashima T."/>
            <person name="Kojima M."/>
            <person name="Kondo S."/>
            <person name="Konno H."/>
            <person name="Nakano K."/>
            <person name="Ninomiya N."/>
            <person name="Nishio T."/>
            <person name="Okada M."/>
            <person name="Plessy C."/>
            <person name="Shibata K."/>
            <person name="Shiraki T."/>
            <person name="Suzuki S."/>
            <person name="Tagami M."/>
            <person name="Waki K."/>
            <person name="Watahiki A."/>
            <person name="Okamura-Oho Y."/>
            <person name="Suzuki H."/>
            <person name="Kawai J."/>
            <person name="Hayashizaki Y."/>
        </authorList>
    </citation>
    <scope>NUCLEOTIDE SEQUENCE [LARGE SCALE MRNA] (ISOFORM 1)</scope>
    <source>
        <strain>C57BL/6J</strain>
    </source>
</reference>
<reference key="4">
    <citation type="journal article" date="2009" name="PLoS Biol.">
        <title>Lineage-specific biology revealed by a finished genome assembly of the mouse.</title>
        <authorList>
            <person name="Church D.M."/>
            <person name="Goodstadt L."/>
            <person name="Hillier L.W."/>
            <person name="Zody M.C."/>
            <person name="Goldstein S."/>
            <person name="She X."/>
            <person name="Bult C.J."/>
            <person name="Agarwala R."/>
            <person name="Cherry J.L."/>
            <person name="DiCuccio M."/>
            <person name="Hlavina W."/>
            <person name="Kapustin Y."/>
            <person name="Meric P."/>
            <person name="Maglott D."/>
            <person name="Birtle Z."/>
            <person name="Marques A.C."/>
            <person name="Graves T."/>
            <person name="Zhou S."/>
            <person name="Teague B."/>
            <person name="Potamousis K."/>
            <person name="Churas C."/>
            <person name="Place M."/>
            <person name="Herschleb J."/>
            <person name="Runnheim R."/>
            <person name="Forrest D."/>
            <person name="Amos-Landgraf J."/>
            <person name="Schwartz D.C."/>
            <person name="Cheng Z."/>
            <person name="Lindblad-Toh K."/>
            <person name="Eichler E.E."/>
            <person name="Ponting C.P."/>
        </authorList>
    </citation>
    <scope>NUCLEOTIDE SEQUENCE [LARGE SCALE GENOMIC DNA]</scope>
    <source>
        <strain>C57BL/6J</strain>
    </source>
</reference>
<reference key="5">
    <citation type="submission" date="2005-07" db="EMBL/GenBank/DDBJ databases">
        <authorList>
            <person name="Mural R.J."/>
            <person name="Adams M.D."/>
            <person name="Myers E.W."/>
            <person name="Smith H.O."/>
            <person name="Venter J.C."/>
        </authorList>
    </citation>
    <scope>NUCLEOTIDE SEQUENCE [LARGE SCALE GENOMIC DNA]</scope>
</reference>
<reference key="6">
    <citation type="journal article" date="2004" name="Genome Res.">
        <title>The status, quality, and expansion of the NIH full-length cDNA project: the Mammalian Gene Collection (MGC).</title>
        <authorList>
            <consortium name="The MGC Project Team"/>
        </authorList>
    </citation>
    <scope>NUCLEOTIDE SEQUENCE [LARGE SCALE MRNA] (ISOFORMS 1 AND 3)</scope>
    <source>
        <strain>C57BL/6J</strain>
        <tissue>Eye</tissue>
    </source>
</reference>
<reference key="7">
    <citation type="journal article" date="2010" name="Mol. Cell. Biol.">
        <title>Deficiency in a glutamine-specific methyltransferase for release factor causes mouse embryonic lethality.</title>
        <authorList>
            <person name="Liu P."/>
            <person name="Nie S."/>
            <person name="Li B."/>
            <person name="Yang Z.Q."/>
            <person name="Xu Z.M."/>
            <person name="Fei J."/>
            <person name="Lin C."/>
            <person name="Zeng R."/>
            <person name="Xu G.L."/>
        </authorList>
    </citation>
    <scope>FUNCTION</scope>
    <scope>CATALYTIC ACTIVITY</scope>
    <scope>DISRUPTION PHENOTYPE</scope>
</reference>
<reference key="8">
    <citation type="journal article" date="2016" name="J. Biol. Chem.">
        <title>Substrate specificity of the HEMK2 protein glutamine methyltransferase and identification of novel substrates.</title>
        <authorList>
            <person name="Kusevic D."/>
            <person name="Kudithipudi S."/>
            <person name="Jeltsch A."/>
        </authorList>
    </citation>
    <scope>FUNCTION</scope>
    <scope>CATALYTIC ACTIVITY</scope>
    <scope>INTERACTION WITH TRMT112</scope>
</reference>
<feature type="chain" id="PRO_0000445556" description="Methyltransferase HEMK2">
    <location>
        <begin position="1"/>
        <end position="214"/>
    </location>
</feature>
<feature type="binding site" evidence="1">
    <location>
        <position position="29"/>
    </location>
    <ligand>
        <name>S-adenosyl-L-methionine</name>
        <dbReference type="ChEBI" id="CHEBI:59789"/>
    </ligand>
</feature>
<feature type="binding site" evidence="1">
    <location>
        <position position="51"/>
    </location>
    <ligand>
        <name>S-adenosyl-L-methionine</name>
        <dbReference type="ChEBI" id="CHEBI:59789"/>
    </ligand>
</feature>
<feature type="binding site" evidence="1">
    <location>
        <position position="53"/>
    </location>
    <ligand>
        <name>S-adenosyl-L-methionine</name>
        <dbReference type="ChEBI" id="CHEBI:59789"/>
    </ligand>
</feature>
<feature type="binding site" evidence="1">
    <location>
        <position position="77"/>
    </location>
    <ligand>
        <name>S-adenosyl-L-methionine</name>
        <dbReference type="ChEBI" id="CHEBI:59789"/>
    </ligand>
</feature>
<feature type="binding site" evidence="1">
    <location>
        <position position="103"/>
    </location>
    <ligand>
        <name>S-adenosyl-L-methionine</name>
        <dbReference type="ChEBI" id="CHEBI:59789"/>
    </ligand>
</feature>
<feature type="binding site" evidence="1">
    <location>
        <position position="104"/>
    </location>
    <ligand>
        <name>S-adenosyl-L-methionine</name>
        <dbReference type="ChEBI" id="CHEBI:59789"/>
    </ligand>
</feature>
<feature type="binding site" evidence="1">
    <location>
        <position position="122"/>
    </location>
    <ligand>
        <name>a protein</name>
        <dbReference type="ChEBI" id="CHEBI:16541"/>
    </ligand>
    <ligandPart>
        <name>N(6)-methyl-L-lysine residue</name>
        <dbReference type="ChEBI" id="CHEBI:61929"/>
    </ligandPart>
</feature>
<feature type="binding site" evidence="1">
    <location>
        <position position="122"/>
    </location>
    <ligand>
        <name>S-adenosyl-L-methionine</name>
        <dbReference type="ChEBI" id="CHEBI:59789"/>
    </ligand>
</feature>
<feature type="splice variant" id="VSP_059900" description="In isoform 3.">
    <original>VGSRGIEAAWAGGRNGRE</original>
    <variation>VRLTTELSLCSQLFHETK</variation>
    <location>
        <begin position="133"/>
        <end position="150"/>
    </location>
</feature>
<feature type="splice variant" id="VSP_059901" description="In isoform 2.">
    <original>VGSRGI</original>
    <variation>RKSLKQ</variation>
    <location>
        <begin position="133"/>
        <end position="138"/>
    </location>
</feature>
<feature type="splice variant" id="VSP_059902" description="In isoform 2.">
    <location>
        <begin position="139"/>
        <end position="214"/>
    </location>
</feature>
<feature type="splice variant" id="VSP_059903" description="In isoform 3.">
    <location>
        <begin position="151"/>
        <end position="214"/>
    </location>
</feature>
<feature type="sequence conflict" description="In Ref. 6; AAH98330." evidence="8" ref="6">
    <original>C</original>
    <variation>Y</variation>
    <location>
        <position position="75"/>
    </location>
</feature>
<proteinExistence type="evidence at protein level"/>
<gene>
    <name evidence="7" type="primary">Hemk2</name>
    <name evidence="1" type="synonym">Kmt9</name>
    <name evidence="9" type="synonym">N6amt1</name>
    <name evidence="6" type="synonym">Pred28</name>
</gene>
<accession>Q6SKR2</accession>
<accession>D3Z6J0</accession>
<accession>E9PXT7</accession>
<accession>Q4KMV5</accession>
<accession>Q6PRU9</accession>
<evidence type="ECO:0000250" key="1">
    <source>
        <dbReference type="UniProtKB" id="Q9Y5N5"/>
    </source>
</evidence>
<evidence type="ECO:0000269" key="2">
    <source>
    </source>
</evidence>
<evidence type="ECO:0000269" key="3">
    <source>
    </source>
</evidence>
<evidence type="ECO:0000269" key="4">
    <source>
    </source>
</evidence>
<evidence type="ECO:0000269" key="5">
    <source>
    </source>
</evidence>
<evidence type="ECO:0000303" key="6">
    <source>
    </source>
</evidence>
<evidence type="ECO:0000303" key="7">
    <source>
    </source>
</evidence>
<evidence type="ECO:0000305" key="8"/>
<evidence type="ECO:0000312" key="9">
    <source>
        <dbReference type="MGI" id="MGI:1915018"/>
    </source>
</evidence>
<protein>
    <recommendedName>
        <fullName>Methyltransferase HEMK2</fullName>
    </recommendedName>
    <alternativeName>
        <fullName evidence="7">HemK methyltransferase family member 2</fullName>
        <shortName>M.HsaHemK2P</shortName>
    </alternativeName>
    <alternativeName>
        <fullName evidence="1">Lysine N-methyltransferase 9</fullName>
        <ecNumber evidence="1">2.1.1.-</ecNumber>
    </alternativeName>
    <alternativeName>
        <fullName evidence="1">Methylarsonite methyltransferase N6AMT1</fullName>
        <ecNumber evidence="1">2.1.1.-</ecNumber>
    </alternativeName>
    <alternativeName>
        <fullName evidence="8">Methyltransferase N6AMT1</fullName>
    </alternativeName>
    <alternativeName>
        <fullName evidence="8">Protein N(5)-glutamine methyltransferase</fullName>
        <ecNumber evidence="4 5">2.1.1.-</ecNumber>
    </alternativeName>
</protein>
<dbReference type="EC" id="2.1.1.-" evidence="1 4 5"/>
<dbReference type="EMBL" id="AY583759">
    <property type="protein sequence ID" value="AAS94315.1"/>
    <property type="molecule type" value="mRNA"/>
</dbReference>
<dbReference type="EMBL" id="AY536887">
    <property type="protein sequence ID" value="AAS45233.1"/>
    <property type="molecule type" value="mRNA"/>
</dbReference>
<dbReference type="EMBL" id="AY456393">
    <property type="protein sequence ID" value="AAR19227.1"/>
    <property type="molecule type" value="mRNA"/>
</dbReference>
<dbReference type="EMBL" id="AK145617">
    <property type="protein sequence ID" value="BAE26543.1"/>
    <property type="molecule type" value="mRNA"/>
</dbReference>
<dbReference type="EMBL" id="AC140319">
    <property type="status" value="NOT_ANNOTATED_CDS"/>
    <property type="molecule type" value="Genomic_DNA"/>
</dbReference>
<dbReference type="EMBL" id="CH466521">
    <property type="protein sequence ID" value="EDK98330.1"/>
    <property type="molecule type" value="Genomic_DNA"/>
</dbReference>
<dbReference type="EMBL" id="CH466521">
    <property type="protein sequence ID" value="EDK98331.1"/>
    <property type="status" value="ALT_SEQ"/>
    <property type="molecule type" value="Genomic_DNA"/>
</dbReference>
<dbReference type="EMBL" id="CH466521">
    <property type="protein sequence ID" value="EDK98332.1"/>
    <property type="molecule type" value="Genomic_DNA"/>
</dbReference>
<dbReference type="EMBL" id="BC098330">
    <property type="protein sequence ID" value="AAH98330.1"/>
    <property type="molecule type" value="mRNA"/>
</dbReference>
<dbReference type="EMBL" id="BC116393">
    <property type="protein sequence ID" value="AAI16394.1"/>
    <property type="molecule type" value="mRNA"/>
</dbReference>
<dbReference type="EMBL" id="BC116394">
    <property type="protein sequence ID" value="AAI16395.1"/>
    <property type="molecule type" value="mRNA"/>
</dbReference>
<dbReference type="CCDS" id="CCDS28289.1">
    <molecule id="Q6SKR2-1"/>
</dbReference>
<dbReference type="CCDS" id="CCDS49889.1">
    <molecule id="Q6SKR2-2"/>
</dbReference>
<dbReference type="RefSeq" id="NP_001152803.1">
    <molecule id="Q6SKR2-2"/>
    <property type="nucleotide sequence ID" value="NM_001159331.1"/>
</dbReference>
<dbReference type="RefSeq" id="NP_080642.1">
    <molecule id="Q6SKR2-1"/>
    <property type="nucleotide sequence ID" value="NM_026366.2"/>
</dbReference>
<dbReference type="SMR" id="Q6SKR2"/>
<dbReference type="FunCoup" id="Q6SKR2">
    <property type="interactions" value="1011"/>
</dbReference>
<dbReference type="STRING" id="10090.ENSMUSP00000061835"/>
<dbReference type="GlyGen" id="Q6SKR2">
    <property type="glycosylation" value="1 site"/>
</dbReference>
<dbReference type="SwissPalm" id="Q6SKR2"/>
<dbReference type="PaxDb" id="10090-ENSMUSP00000061835"/>
<dbReference type="PeptideAtlas" id="Q6SKR2"/>
<dbReference type="ProteomicsDB" id="308470"/>
<dbReference type="ProteomicsDB" id="308569">
    <molecule id="Q6SKR2-1"/>
</dbReference>
<dbReference type="ProteomicsDB" id="333143"/>
<dbReference type="ProteomicsDB" id="357615"/>
<dbReference type="Pumba" id="Q6SKR2"/>
<dbReference type="Antibodypedia" id="22362">
    <property type="antibodies" value="191 antibodies from 25 providers"/>
</dbReference>
<dbReference type="DNASU" id="67768"/>
<dbReference type="Ensembl" id="ENSMUST00000054442.11">
    <molecule id="Q6SKR2-1"/>
    <property type="protein sequence ID" value="ENSMUSP00000061835.5"/>
    <property type="gene ID" value="ENSMUSG00000044442.12"/>
</dbReference>
<dbReference type="Ensembl" id="ENSMUST00000118310.8">
    <molecule id="Q6SKR2-2"/>
    <property type="protein sequence ID" value="ENSMUSP00000113229.2"/>
    <property type="gene ID" value="ENSMUSG00000044442.12"/>
</dbReference>
<dbReference type="Ensembl" id="ENSMUST00000120284.8">
    <molecule id="Q6SKR2-3"/>
    <property type="protein sequence ID" value="ENSMUSP00000112510.2"/>
    <property type="gene ID" value="ENSMUSG00000044442.12"/>
</dbReference>
<dbReference type="GeneID" id="67768"/>
<dbReference type="KEGG" id="mmu:67768"/>
<dbReference type="UCSC" id="uc007zuc.1">
    <property type="organism name" value="mouse"/>
</dbReference>
<dbReference type="UCSC" id="uc007zud.1">
    <molecule id="Q6SKR2-1"/>
    <property type="organism name" value="mouse"/>
</dbReference>
<dbReference type="UCSC" id="uc007zue.1">
    <property type="organism name" value="mouse"/>
</dbReference>
<dbReference type="AGR" id="MGI:1915018"/>
<dbReference type="CTD" id="67768"/>
<dbReference type="MGI" id="MGI:1915018">
    <property type="gene designation" value="N6amt1"/>
</dbReference>
<dbReference type="VEuPathDB" id="HostDB:ENSMUSG00000044442"/>
<dbReference type="eggNOG" id="KOG3191">
    <property type="taxonomic scope" value="Eukaryota"/>
</dbReference>
<dbReference type="GeneTree" id="ENSGT00390000013073"/>
<dbReference type="HOGENOM" id="CLU_153981_0_0_1"/>
<dbReference type="InParanoid" id="Q6SKR2"/>
<dbReference type="OMA" id="EWDDWME"/>
<dbReference type="OrthoDB" id="406152at2759"/>
<dbReference type="PhylomeDB" id="Q6SKR2"/>
<dbReference type="TreeFam" id="TF314919"/>
<dbReference type="BRENDA" id="2.1.1.297">
    <property type="organism ID" value="3474"/>
</dbReference>
<dbReference type="Reactome" id="R-MMU-156581">
    <property type="pathway name" value="Methylation"/>
</dbReference>
<dbReference type="Reactome" id="R-MMU-72764">
    <property type="pathway name" value="Eukaryotic Translation Termination"/>
</dbReference>
<dbReference type="BioGRID-ORCS" id="67768">
    <property type="hits" value="31 hits in 79 CRISPR screens"/>
</dbReference>
<dbReference type="ChiTaRS" id="N6amt1">
    <property type="organism name" value="mouse"/>
</dbReference>
<dbReference type="PRO" id="PR:Q6SKR2"/>
<dbReference type="Proteomes" id="UP000000589">
    <property type="component" value="Chromosome 16"/>
</dbReference>
<dbReference type="RNAct" id="Q6SKR2">
    <property type="molecule type" value="protein"/>
</dbReference>
<dbReference type="Bgee" id="ENSMUSG00000044442">
    <property type="expression patterns" value="Expressed in interventricular septum and 221 other cell types or tissues"/>
</dbReference>
<dbReference type="ExpressionAtlas" id="Q6SKR2">
    <property type="expression patterns" value="baseline and differential"/>
</dbReference>
<dbReference type="GO" id="GO:0005634">
    <property type="term" value="C:nucleus"/>
    <property type="evidence" value="ECO:0000314"/>
    <property type="project" value="UniProtKB"/>
</dbReference>
<dbReference type="GO" id="GO:0032991">
    <property type="term" value="C:protein-containing complex"/>
    <property type="evidence" value="ECO:0000266"/>
    <property type="project" value="MGI"/>
</dbReference>
<dbReference type="GO" id="GO:0030791">
    <property type="term" value="F:arsenite methyltransferase activity"/>
    <property type="evidence" value="ECO:0000250"/>
    <property type="project" value="UniProtKB"/>
</dbReference>
<dbReference type="GO" id="GO:0140984">
    <property type="term" value="F:histone H4K12 methyltransferase activity"/>
    <property type="evidence" value="ECO:0000250"/>
    <property type="project" value="UniProtKB"/>
</dbReference>
<dbReference type="GO" id="GO:0003676">
    <property type="term" value="F:nucleic acid binding"/>
    <property type="evidence" value="ECO:0007669"/>
    <property type="project" value="InterPro"/>
</dbReference>
<dbReference type="GO" id="GO:0008276">
    <property type="term" value="F:protein methyltransferase activity"/>
    <property type="evidence" value="ECO:0000266"/>
    <property type="project" value="MGI"/>
</dbReference>
<dbReference type="GO" id="GO:0036009">
    <property type="term" value="F:protein-glutamine N-methyltransferase activity"/>
    <property type="evidence" value="ECO:0000314"/>
    <property type="project" value="UniProtKB"/>
</dbReference>
<dbReference type="GO" id="GO:1904047">
    <property type="term" value="F:S-adenosyl-L-methionine binding"/>
    <property type="evidence" value="ECO:0000250"/>
    <property type="project" value="UniProtKB"/>
</dbReference>
<dbReference type="GO" id="GO:0018872">
    <property type="term" value="P:arsonoacetate metabolic process"/>
    <property type="evidence" value="ECO:0000250"/>
    <property type="project" value="UniProtKB"/>
</dbReference>
<dbReference type="GO" id="GO:0032259">
    <property type="term" value="P:methylation"/>
    <property type="evidence" value="ECO:0000250"/>
    <property type="project" value="UniProtKB"/>
</dbReference>
<dbReference type="GO" id="GO:0045814">
    <property type="term" value="P:negative regulation of gene expression, epigenetic"/>
    <property type="evidence" value="ECO:0007669"/>
    <property type="project" value="Ensembl"/>
</dbReference>
<dbReference type="GO" id="GO:0018364">
    <property type="term" value="P:peptidyl-glutamine methylation"/>
    <property type="evidence" value="ECO:0000314"/>
    <property type="project" value="UniProtKB"/>
</dbReference>
<dbReference type="GO" id="GO:0030307">
    <property type="term" value="P:positive regulation of cell growth"/>
    <property type="evidence" value="ECO:0000266"/>
    <property type="project" value="MGI"/>
</dbReference>
<dbReference type="GO" id="GO:0009404">
    <property type="term" value="P:toxin metabolic process"/>
    <property type="evidence" value="ECO:0000250"/>
    <property type="project" value="UniProtKB"/>
</dbReference>
<dbReference type="GO" id="GO:0045815">
    <property type="term" value="P:transcription initiation-coupled chromatin remodeling"/>
    <property type="evidence" value="ECO:0000250"/>
    <property type="project" value="UniProtKB"/>
</dbReference>
<dbReference type="CDD" id="cd02440">
    <property type="entry name" value="AdoMet_MTases"/>
    <property type="match status" value="1"/>
</dbReference>
<dbReference type="FunFam" id="3.40.50.150:FF:000077">
    <property type="entry name" value="HemK methyltransferase family member 2"/>
    <property type="match status" value="1"/>
</dbReference>
<dbReference type="Gene3D" id="3.40.50.150">
    <property type="entry name" value="Vaccinia Virus protein VP39"/>
    <property type="match status" value="1"/>
</dbReference>
<dbReference type="InterPro" id="IPR002052">
    <property type="entry name" value="DNA_methylase_N6_adenine_CS"/>
</dbReference>
<dbReference type="InterPro" id="IPR052190">
    <property type="entry name" value="Euk-Arch_PrmC-MTase"/>
</dbReference>
<dbReference type="InterPro" id="IPR004557">
    <property type="entry name" value="PrmC-related"/>
</dbReference>
<dbReference type="InterPro" id="IPR029063">
    <property type="entry name" value="SAM-dependent_MTases_sf"/>
</dbReference>
<dbReference type="InterPro" id="IPR007848">
    <property type="entry name" value="Small_mtfrase_dom"/>
</dbReference>
<dbReference type="NCBIfam" id="TIGR00537">
    <property type="entry name" value="hemK_rel_arch"/>
    <property type="match status" value="1"/>
</dbReference>
<dbReference type="PANTHER" id="PTHR45875">
    <property type="entry name" value="METHYLTRANSFERASE N6AMT1"/>
    <property type="match status" value="1"/>
</dbReference>
<dbReference type="PANTHER" id="PTHR45875:SF1">
    <property type="entry name" value="METHYLTRANSFERASE N6AMT1"/>
    <property type="match status" value="1"/>
</dbReference>
<dbReference type="Pfam" id="PF05175">
    <property type="entry name" value="MTS"/>
    <property type="match status" value="1"/>
</dbReference>
<dbReference type="SUPFAM" id="SSF53335">
    <property type="entry name" value="S-adenosyl-L-methionine-dependent methyltransferases"/>
    <property type="match status" value="1"/>
</dbReference>
<dbReference type="PROSITE" id="PS00092">
    <property type="entry name" value="N6_MTASE"/>
    <property type="match status" value="1"/>
</dbReference>
<keyword id="KW-0025">Alternative splicing</keyword>
<keyword id="KW-0156">Chromatin regulator</keyword>
<keyword id="KW-0489">Methyltransferase</keyword>
<keyword id="KW-0539">Nucleus</keyword>
<keyword id="KW-1185">Reference proteome</keyword>
<keyword id="KW-0949">S-adenosyl-L-methionine</keyword>
<keyword id="KW-0808">Transferase</keyword>
<keyword id="KW-0832">Ubl conjugation</keyword>